<proteinExistence type="inferred from homology"/>
<sequence>MPHVRVKENEPFEVALRRFKRTCEKAGVLTEVRRREFYEKPTEIRKRKAAAAVKRQAKRVSKEVARRERLY</sequence>
<evidence type="ECO:0000255" key="1">
    <source>
        <dbReference type="HAMAP-Rule" id="MF_00358"/>
    </source>
</evidence>
<evidence type="ECO:0000305" key="2"/>
<keyword id="KW-1185">Reference proteome</keyword>
<keyword id="KW-0687">Ribonucleoprotein</keyword>
<keyword id="KW-0689">Ribosomal protein</keyword>
<protein>
    <recommendedName>
        <fullName evidence="1">Small ribosomal subunit protein bS21</fullName>
    </recommendedName>
    <alternativeName>
        <fullName evidence="2">30S ribosomal protein S21</fullName>
    </alternativeName>
</protein>
<gene>
    <name evidence="1" type="primary">rpsU</name>
    <name type="ordered locus">Tgr7_3017</name>
</gene>
<feature type="chain" id="PRO_1000133495" description="Small ribosomal subunit protein bS21">
    <location>
        <begin position="1"/>
        <end position="71"/>
    </location>
</feature>
<reference key="1">
    <citation type="journal article" date="2011" name="Stand. Genomic Sci.">
        <title>Complete genome sequence of 'Thioalkalivibrio sulfidophilus' HL-EbGr7.</title>
        <authorList>
            <person name="Muyzer G."/>
            <person name="Sorokin D.Y."/>
            <person name="Mavromatis K."/>
            <person name="Lapidus A."/>
            <person name="Clum A."/>
            <person name="Ivanova N."/>
            <person name="Pati A."/>
            <person name="d'Haeseleer P."/>
            <person name="Woyke T."/>
            <person name="Kyrpides N.C."/>
        </authorList>
    </citation>
    <scope>NUCLEOTIDE SEQUENCE [LARGE SCALE GENOMIC DNA]</scope>
    <source>
        <strain>HL-EbGR7</strain>
    </source>
</reference>
<comment type="similarity">
    <text evidence="1">Belongs to the bacterial ribosomal protein bS21 family.</text>
</comment>
<name>RS21_THISH</name>
<accession>B8GPU0</accession>
<dbReference type="EMBL" id="CP001339">
    <property type="protein sequence ID" value="ACL74087.1"/>
    <property type="molecule type" value="Genomic_DNA"/>
</dbReference>
<dbReference type="RefSeq" id="WP_012639550.1">
    <property type="nucleotide sequence ID" value="NC_011901.1"/>
</dbReference>
<dbReference type="SMR" id="B8GPU0"/>
<dbReference type="STRING" id="396588.Tgr7_3017"/>
<dbReference type="KEGG" id="tgr:Tgr7_3017"/>
<dbReference type="eggNOG" id="COG0828">
    <property type="taxonomic scope" value="Bacteria"/>
</dbReference>
<dbReference type="HOGENOM" id="CLU_159258_1_0_6"/>
<dbReference type="OrthoDB" id="9799244at2"/>
<dbReference type="Proteomes" id="UP000002383">
    <property type="component" value="Chromosome"/>
</dbReference>
<dbReference type="GO" id="GO:1990904">
    <property type="term" value="C:ribonucleoprotein complex"/>
    <property type="evidence" value="ECO:0007669"/>
    <property type="project" value="UniProtKB-KW"/>
</dbReference>
<dbReference type="GO" id="GO:0005840">
    <property type="term" value="C:ribosome"/>
    <property type="evidence" value="ECO:0007669"/>
    <property type="project" value="UniProtKB-KW"/>
</dbReference>
<dbReference type="GO" id="GO:0003735">
    <property type="term" value="F:structural constituent of ribosome"/>
    <property type="evidence" value="ECO:0007669"/>
    <property type="project" value="InterPro"/>
</dbReference>
<dbReference type="GO" id="GO:0006412">
    <property type="term" value="P:translation"/>
    <property type="evidence" value="ECO:0007669"/>
    <property type="project" value="UniProtKB-UniRule"/>
</dbReference>
<dbReference type="Gene3D" id="1.20.5.1150">
    <property type="entry name" value="Ribosomal protein S8"/>
    <property type="match status" value="1"/>
</dbReference>
<dbReference type="HAMAP" id="MF_00358">
    <property type="entry name" value="Ribosomal_bS21"/>
    <property type="match status" value="1"/>
</dbReference>
<dbReference type="InterPro" id="IPR001911">
    <property type="entry name" value="Ribosomal_bS21"/>
</dbReference>
<dbReference type="InterPro" id="IPR018278">
    <property type="entry name" value="Ribosomal_bS21_CS"/>
</dbReference>
<dbReference type="InterPro" id="IPR038380">
    <property type="entry name" value="Ribosomal_bS21_sf"/>
</dbReference>
<dbReference type="NCBIfam" id="TIGR00030">
    <property type="entry name" value="S21p"/>
    <property type="match status" value="1"/>
</dbReference>
<dbReference type="PANTHER" id="PTHR21109">
    <property type="entry name" value="MITOCHONDRIAL 28S RIBOSOMAL PROTEIN S21"/>
    <property type="match status" value="1"/>
</dbReference>
<dbReference type="PANTHER" id="PTHR21109:SF22">
    <property type="entry name" value="SMALL RIBOSOMAL SUBUNIT PROTEIN BS21"/>
    <property type="match status" value="1"/>
</dbReference>
<dbReference type="Pfam" id="PF01165">
    <property type="entry name" value="Ribosomal_S21"/>
    <property type="match status" value="1"/>
</dbReference>
<dbReference type="PRINTS" id="PR00976">
    <property type="entry name" value="RIBOSOMALS21"/>
</dbReference>
<dbReference type="PROSITE" id="PS01181">
    <property type="entry name" value="RIBOSOMAL_S21"/>
    <property type="match status" value="1"/>
</dbReference>
<organism>
    <name type="scientific">Thioalkalivibrio sulfidiphilus (strain HL-EbGR7)</name>
    <dbReference type="NCBI Taxonomy" id="396588"/>
    <lineage>
        <taxon>Bacteria</taxon>
        <taxon>Pseudomonadati</taxon>
        <taxon>Pseudomonadota</taxon>
        <taxon>Gammaproteobacteria</taxon>
        <taxon>Chromatiales</taxon>
        <taxon>Ectothiorhodospiraceae</taxon>
        <taxon>Thioalkalivibrio</taxon>
    </lineage>
</organism>